<dbReference type="EC" id="2.3.1.-" evidence="3"/>
<dbReference type="EMBL" id="RCNU01000001">
    <property type="protein sequence ID" value="RWR00194.1"/>
    <property type="molecule type" value="Genomic_DNA"/>
</dbReference>
<dbReference type="SMR" id="A0A443I7W9"/>
<dbReference type="STRING" id="264951.A0A443I7W9"/>
<dbReference type="VEuPathDB" id="FungiDB:C8Q69DRAFT_50394"/>
<dbReference type="Proteomes" id="UP000283841">
    <property type="component" value="Unassembled WGS sequence"/>
</dbReference>
<dbReference type="GO" id="GO:0030170">
    <property type="term" value="F:pyridoxal phosphate binding"/>
    <property type="evidence" value="ECO:0007669"/>
    <property type="project" value="InterPro"/>
</dbReference>
<dbReference type="GO" id="GO:0008483">
    <property type="term" value="F:transaminase activity"/>
    <property type="evidence" value="ECO:0007669"/>
    <property type="project" value="UniProtKB-KW"/>
</dbReference>
<dbReference type="GO" id="GO:0009102">
    <property type="term" value="P:biotin biosynthetic process"/>
    <property type="evidence" value="ECO:0007669"/>
    <property type="project" value="TreeGrafter"/>
</dbReference>
<dbReference type="Gene3D" id="3.90.1150.10">
    <property type="entry name" value="Aspartate Aminotransferase, domain 1"/>
    <property type="match status" value="1"/>
</dbReference>
<dbReference type="Gene3D" id="3.40.640.10">
    <property type="entry name" value="Type I PLP-dependent aspartate aminotransferase-like (Major domain)"/>
    <property type="match status" value="1"/>
</dbReference>
<dbReference type="InterPro" id="IPR004839">
    <property type="entry name" value="Aminotransferase_I/II_large"/>
</dbReference>
<dbReference type="InterPro" id="IPR050087">
    <property type="entry name" value="AON_synthase_class-II"/>
</dbReference>
<dbReference type="InterPro" id="IPR015424">
    <property type="entry name" value="PyrdxlP-dep_Trfase"/>
</dbReference>
<dbReference type="InterPro" id="IPR015421">
    <property type="entry name" value="PyrdxlP-dep_Trfase_major"/>
</dbReference>
<dbReference type="InterPro" id="IPR015422">
    <property type="entry name" value="PyrdxlP-dep_Trfase_small"/>
</dbReference>
<dbReference type="PANTHER" id="PTHR13693:SF77">
    <property type="entry name" value="8-AMINO-7-OXONONANOATE SYNTHASE"/>
    <property type="match status" value="1"/>
</dbReference>
<dbReference type="PANTHER" id="PTHR13693">
    <property type="entry name" value="CLASS II AMINOTRANSFERASE/8-AMINO-7-OXONONANOATE SYNTHASE"/>
    <property type="match status" value="1"/>
</dbReference>
<dbReference type="Pfam" id="PF00155">
    <property type="entry name" value="Aminotran_1_2"/>
    <property type="match status" value="1"/>
</dbReference>
<dbReference type="SUPFAM" id="SSF53383">
    <property type="entry name" value="PLP-dependent transferases"/>
    <property type="match status" value="1"/>
</dbReference>
<protein>
    <recommendedName>
        <fullName evidence="4">Aminoacyl transferase sphA</fullName>
        <ecNumber evidence="3">2.3.1.-</ecNumber>
    </recommendedName>
    <alternativeName>
        <fullName evidence="4">Sphingofungin biosynthesis cluster protein A</fullName>
    </alternativeName>
</protein>
<proteinExistence type="evidence at protein level"/>
<accession>A0A443I7W9</accession>
<name>SPHA_BYSSP</name>
<feature type="chain" id="PRO_0000461277" description="Aminoacyl transferase sphA">
    <location>
        <begin position="1"/>
        <end position="470"/>
    </location>
</feature>
<feature type="binding site" evidence="1">
    <location>
        <position position="212"/>
    </location>
    <ligand>
        <name>pyridoxal 5'-phosphate</name>
        <dbReference type="ChEBI" id="CHEBI:597326"/>
    </ligand>
</feature>
<feature type="binding site" evidence="1">
    <location>
        <position position="244"/>
    </location>
    <ligand>
        <name>pyridoxal 5'-phosphate</name>
        <dbReference type="ChEBI" id="CHEBI:597326"/>
    </ligand>
</feature>
<feature type="binding site" evidence="1">
    <location>
        <position position="272"/>
    </location>
    <ligand>
        <name>pyridoxal 5'-phosphate</name>
        <dbReference type="ChEBI" id="CHEBI:597326"/>
    </ligand>
</feature>
<feature type="modified residue" description="N6-(pyridoxal phosphate)lysine" evidence="1">
    <location>
        <position position="275"/>
    </location>
</feature>
<sequence>MAVPDKIVSELASWMKDQKLVAPQMKDATAFYRNLEEALDVRRSTQSMNTRGQNTWKDGSAIDFCSNDLLSLGRTGELRTEFLSELAKYPDFALYSGGSRVLGGNYDYIEKVEQEIADFLGAETALMFDSGFNGNVAIYTSIPRPGDAIVYDELVHLSTHTGMAASLAATKVAFRHNDIDAFREAMISVMESQPMIQDGSRSILVSVESVYSMDGDVCPLVEMLEIAREICPKKNFAFITDEAHATGIIGPKGVGLVKHLGLEKEIAVRLNTSGKALACTGSVVLGSATVRNAMLNFAGSVTNTTAPSFPSVAVVRSAYNLLRTGATQKAQDNIQHLVRYFFKSVSSHTLWDQANDMGLLSIPIIEESKDRDFVTHIVPIWTRQKYNWWLFFHLQLAKIAVVPINYPQVPKGKARLRIMIHATNTESEVDYLVSMIYGFVKEMMDIEESGEKGKIPKAAQKIYALMAANA</sequence>
<keyword id="KW-0032">Aminotransferase</keyword>
<keyword id="KW-0663">Pyridoxal phosphate</keyword>
<keyword id="KW-1185">Reference proteome</keyword>
<keyword id="KW-0808">Transferase</keyword>
<comment type="function">
    <text evidence="3">Aminoacyl transferase; part of the gene cluster that mediates the biosynthesis of sphingofungins, bioactive molecules acting as sphingolipid inhibitors via inhibiting serine palmitoyl transferase (SPT) (PubMed:35023724). Within the pathway, sphA transfers 2-methyl-aminomalonate and 2-hydroxymethyl-aminomalonate onto the sphB product 3-hydroxyoctadeca-4,10-dienoyl-ACP to produce the precursors of sphingofungins E and F. The substrate specificity of sphA using 2-methyl-aminomalonate and 2-hydroxymethyl-aminomalonate instread of aminomalonate is responsible for the biosynthesis of sphingofungins E and F but not B and C like in Aspergillus fumigatus. The PKS sphB does not contain any putative thioesterase domain for releasing the nascent polyketide chain and it has been suggested that aminoacyl transferases can facilitate the polyketide chain release (PubMed:35023724).</text>
</comment>
<comment type="cofactor">
    <cofactor evidence="1">
        <name>pyridoxal 5'-phosphate</name>
        <dbReference type="ChEBI" id="CHEBI:597326"/>
    </cofactor>
</comment>
<comment type="pathway">
    <text evidence="3">Secondary metabolite biosynthesis.</text>
</comment>
<comment type="subunit">
    <text evidence="1">Homodimer.</text>
</comment>
<comment type="biotechnology">
    <text evidence="2">The sphingofungin E shows a limited antifungal spectrum of activity but are especially effective against Cryptococcus species, fungal pathogens causing opportunistic infections in human.</text>
</comment>
<comment type="similarity">
    <text evidence="5">Belongs to the class-II pyridoxal-phosphate-dependent aminotransferase family. BioF subfamily.</text>
</comment>
<evidence type="ECO:0000250" key="1">
    <source>
        <dbReference type="UniProtKB" id="B7LC58"/>
    </source>
</evidence>
<evidence type="ECO:0000269" key="2">
    <source>
    </source>
</evidence>
<evidence type="ECO:0000269" key="3">
    <source>
    </source>
</evidence>
<evidence type="ECO:0000303" key="4">
    <source>
    </source>
</evidence>
<evidence type="ECO:0000305" key="5"/>
<organism>
    <name type="scientific">Byssochlamys spectabilis</name>
    <name type="common">Paecilomyces variotii</name>
    <dbReference type="NCBI Taxonomy" id="264951"/>
    <lineage>
        <taxon>Eukaryota</taxon>
        <taxon>Fungi</taxon>
        <taxon>Dikarya</taxon>
        <taxon>Ascomycota</taxon>
        <taxon>Pezizomycotina</taxon>
        <taxon>Eurotiomycetes</taxon>
        <taxon>Eurotiomycetidae</taxon>
        <taxon>Eurotiales</taxon>
        <taxon>Thermoascaceae</taxon>
        <taxon>Paecilomyces</taxon>
    </lineage>
</organism>
<reference key="1">
    <citation type="journal article" date="2018" name="Front. Microbiol.">
        <title>Genomic and genetic insights into a cosmopolitan fungus, Paecilomyces variotii (Eurotiales).</title>
        <authorList>
            <person name="Urquhart A.S."/>
            <person name="Mondo S.J."/>
            <person name="Maekelae M.R."/>
            <person name="Hane J.K."/>
            <person name="Wiebenga A."/>
            <person name="He G."/>
            <person name="Mihaltcheva S."/>
            <person name="Pangilinan J."/>
            <person name="Lipzen A."/>
            <person name="Barry K."/>
            <person name="de Vries R.P."/>
            <person name="Grigoriev I.V."/>
            <person name="Idnurm A."/>
        </authorList>
    </citation>
    <scope>NUCLEOTIDE SEQUENCE [LARGE SCALE GENOMIC DNA]</scope>
    <source>
        <strain>ATCC 90900 / JCM 12815 / CBS 101075</strain>
    </source>
</reference>
<reference key="2">
    <citation type="journal article" date="1992" name="J. Antibiot.">
        <title>Sphingofungins E and F: novel serinepalmitoyl transferase inhibitors from Paecilomyces variotii.</title>
        <authorList>
            <person name="Horn W.S."/>
            <person name="Smith J.L."/>
            <person name="Bills G.F."/>
            <person name="Raghoobar S.L."/>
            <person name="Helms G.L."/>
            <person name="Kurtz M.B."/>
            <person name="Marrinan J.A."/>
            <person name="Frommer B.R."/>
            <person name="Thornton R.A."/>
            <person name="Mandala S.M."/>
        </authorList>
    </citation>
    <scope>BIOTECHNOLOGY</scope>
</reference>
<reference key="3">
    <citation type="journal article" date="2022" name="ACS Chem. Biol.">
        <title>Biosynthesis of the sphingolipid inhibitors sphingofungins in filamentous fungi requires aminomalonate as a metabolic precursor.</title>
        <authorList>
            <person name="Bissell A.U."/>
            <person name="Rautschek J."/>
            <person name="Hoefgen S."/>
            <person name="Raguz L."/>
            <person name="Mattern D.J."/>
            <person name="Saeed N."/>
            <person name="Janevska S."/>
            <person name="Jojic K."/>
            <person name="Huang Y."/>
            <person name="Kufs J.E."/>
            <person name="Herboeck B."/>
            <person name="Guo H."/>
            <person name="Hillmann F."/>
            <person name="Beemelmanns C."/>
            <person name="Valiante V."/>
        </authorList>
    </citation>
    <scope>FUNCTION</scope>
    <scope>CATALYTIC ACTIVITY</scope>
    <scope>PATHWAY</scope>
</reference>
<gene>
    <name evidence="4" type="primary">sphA</name>
    <name type="ORF">C8Q69DRAFT_50394</name>
</gene>